<keyword id="KW-0150">Chloroplast</keyword>
<keyword id="KW-0934">Plastid</keyword>
<proteinExistence type="predicted"/>
<name>YCX1_DIALT</name>
<reference key="1">
    <citation type="journal article" date="1992" name="Curr. Genet.">
        <title>Identification of a chloroplast-encoded secA gene homologue in a chromophytic alga: possible role in chloroplast protein translocation.</title>
        <authorList>
            <person name="Scaramuzzi C.D."/>
            <person name="Hiller R.G."/>
            <person name="Stokes H.W."/>
        </authorList>
    </citation>
    <scope>NUCLEOTIDE SEQUENCE [GENOMIC DNA]</scope>
</reference>
<dbReference type="EMBL" id="X65961">
    <property type="protein sequence ID" value="CAA46775.1"/>
    <property type="molecule type" value="Genomic_DNA"/>
</dbReference>
<dbReference type="PIR" id="S27028">
    <property type="entry name" value="S27028"/>
</dbReference>
<dbReference type="GO" id="GO:0009507">
    <property type="term" value="C:chloroplast"/>
    <property type="evidence" value="ECO:0007669"/>
    <property type="project" value="UniProtKB-SubCell"/>
</dbReference>
<comment type="subcellular location">
    <subcellularLocation>
        <location>Plastid</location>
        <location>Chloroplast</location>
    </subcellularLocation>
</comment>
<protein>
    <recommendedName>
        <fullName>Uncharacterized 10.9 kDa protein in secA 5'region</fullName>
    </recommendedName>
</protein>
<organism>
    <name type="scientific">Diacronema lutheri</name>
    <name type="common">Unicellular marine alga</name>
    <name type="synonym">Monochrysis lutheri</name>
    <dbReference type="NCBI Taxonomy" id="2081491"/>
    <lineage>
        <taxon>Eukaryota</taxon>
        <taxon>Haptista</taxon>
        <taxon>Haptophyta</taxon>
        <taxon>Pavlovales</taxon>
        <taxon>Pavlovaceae</taxon>
        <taxon>Diacronema</taxon>
    </lineage>
</organism>
<accession>Q01572</accession>
<geneLocation type="chloroplast"/>
<sequence length="93" mass="10860">MRPIHICLNVRFLFFRPIYACNIDFITLAFAVRKSLFDDPLNPLAIFKTLFLSYSSYTTSFNSHESPCIKSFTNSTLKINIYKILVNLPYLQK</sequence>
<feature type="chain" id="PRO_0000217521" description="Uncharacterized 10.9 kDa protein in secA 5'region">
    <location>
        <begin position="1"/>
        <end position="93"/>
    </location>
</feature>